<protein>
    <recommendedName>
        <fullName evidence="1">L-rhamnose-proton symporter</fullName>
    </recommendedName>
    <alternativeName>
        <fullName evidence="1">L-rhamnose-H(+) transport protein</fullName>
    </alternativeName>
</protein>
<name>RHAT_SALDC</name>
<comment type="function">
    <text evidence="1">Uptake of L-rhamnose across the cytoplasmic membrane with the concomitant transport of protons into the cell (symport system).</text>
</comment>
<comment type="catalytic activity">
    <reaction evidence="1">
        <text>L-rhamnopyranose(in) + H(+)(in) = L-rhamnopyranose(out) + H(+)(out)</text>
        <dbReference type="Rhea" id="RHEA:29947"/>
        <dbReference type="ChEBI" id="CHEBI:15378"/>
        <dbReference type="ChEBI" id="CHEBI:62346"/>
    </reaction>
    <physiologicalReaction direction="right-to-left" evidence="1">
        <dbReference type="Rhea" id="RHEA:29949"/>
    </physiologicalReaction>
</comment>
<comment type="subcellular location">
    <subcellularLocation>
        <location evidence="1">Cell inner membrane</location>
        <topology evidence="1">Multi-pass membrane protein</topology>
    </subcellularLocation>
</comment>
<comment type="similarity">
    <text evidence="1">Belongs to the L-rhamnose transporter (TC 2.A.7.6) family.</text>
</comment>
<reference key="1">
    <citation type="journal article" date="2011" name="J. Bacteriol.">
        <title>Comparative genomics of 28 Salmonella enterica isolates: evidence for CRISPR-mediated adaptive sublineage evolution.</title>
        <authorList>
            <person name="Fricke W.F."/>
            <person name="Mammel M.K."/>
            <person name="McDermott P.F."/>
            <person name="Tartera C."/>
            <person name="White D.G."/>
            <person name="Leclerc J.E."/>
            <person name="Ravel J."/>
            <person name="Cebula T.A."/>
        </authorList>
    </citation>
    <scope>NUCLEOTIDE SEQUENCE [LARGE SCALE GENOMIC DNA]</scope>
    <source>
        <strain>CT_02021853</strain>
    </source>
</reference>
<gene>
    <name evidence="1" type="primary">rhaT</name>
    <name type="ordered locus">SeD_A4445</name>
</gene>
<evidence type="ECO:0000255" key="1">
    <source>
        <dbReference type="HAMAP-Rule" id="MF_01532"/>
    </source>
</evidence>
<proteinExistence type="inferred from homology"/>
<organism>
    <name type="scientific">Salmonella dublin (strain CT_02021853)</name>
    <dbReference type="NCBI Taxonomy" id="439851"/>
    <lineage>
        <taxon>Bacteria</taxon>
        <taxon>Pseudomonadati</taxon>
        <taxon>Pseudomonadota</taxon>
        <taxon>Gammaproteobacteria</taxon>
        <taxon>Enterobacterales</taxon>
        <taxon>Enterobacteriaceae</taxon>
        <taxon>Salmonella</taxon>
    </lineage>
</organism>
<sequence>MSNAITMGIFWHLIGAASAACFYAPFKQVKQWSWETMWSVGGIVSWLILPWAISALLLPDFWAYYGQFNLSTLLPVFLFGAMWGIGNINYGLTMRYLGMSMGIGIAIGITLIVGTLMTPIINGNFDVLIHTEGGRMTLLGVFVALIGVGIVTRAGQLKERKMGIKAEEFNLKKGLLLAVMCGIFSAGMSFAMNAAKPMHEAAAALGVDPLYVALPSYVVIMGGGALVNLGFCFIRLAKVQNLSIKADFSLARPLIISNILLSALGGLMWYLQFFFYAWGHARIPAQYDYMSWMLHMSFYVLCGGLVGLVLKEWKNAGRRPVAVLSLGCVVIIIAANIVGLGMAS</sequence>
<dbReference type="EMBL" id="CP001144">
    <property type="protein sequence ID" value="ACH76072.1"/>
    <property type="molecule type" value="Genomic_DNA"/>
</dbReference>
<dbReference type="RefSeq" id="WP_000063533.1">
    <property type="nucleotide sequence ID" value="NC_011205.1"/>
</dbReference>
<dbReference type="KEGG" id="sed:SeD_A4445"/>
<dbReference type="HOGENOM" id="CLU_066437_0_0_6"/>
<dbReference type="Proteomes" id="UP000008322">
    <property type="component" value="Chromosome"/>
</dbReference>
<dbReference type="GO" id="GO:0005886">
    <property type="term" value="C:plasma membrane"/>
    <property type="evidence" value="ECO:0007669"/>
    <property type="project" value="UniProtKB-SubCell"/>
</dbReference>
<dbReference type="GO" id="GO:0015153">
    <property type="term" value="F:rhamnose transmembrane transporter activity"/>
    <property type="evidence" value="ECO:0007669"/>
    <property type="project" value="UniProtKB-UniRule"/>
</dbReference>
<dbReference type="GO" id="GO:0015293">
    <property type="term" value="F:symporter activity"/>
    <property type="evidence" value="ECO:0007669"/>
    <property type="project" value="UniProtKB-KW"/>
</dbReference>
<dbReference type="HAMAP" id="MF_01532">
    <property type="entry name" value="RhaT"/>
    <property type="match status" value="1"/>
</dbReference>
<dbReference type="InterPro" id="IPR004673">
    <property type="entry name" value="L-rhamnose-proton_sym_RhaT"/>
</dbReference>
<dbReference type="NCBIfam" id="NF010021">
    <property type="entry name" value="PRK13499.1-1"/>
    <property type="match status" value="1"/>
</dbReference>
<dbReference type="NCBIfam" id="NF010023">
    <property type="entry name" value="PRK13499.1-3"/>
    <property type="match status" value="1"/>
</dbReference>
<dbReference type="NCBIfam" id="TIGR00776">
    <property type="entry name" value="RhaT"/>
    <property type="match status" value="1"/>
</dbReference>
<dbReference type="Pfam" id="PF06379">
    <property type="entry name" value="RhaT"/>
    <property type="match status" value="1"/>
</dbReference>
<accession>B5FPP7</accession>
<feature type="chain" id="PRO_1000146495" description="L-rhamnose-proton symporter">
    <location>
        <begin position="1"/>
        <end position="344"/>
    </location>
</feature>
<feature type="transmembrane region" description="Helical" evidence="1">
    <location>
        <begin position="4"/>
        <end position="24"/>
    </location>
</feature>
<feature type="transmembrane region" description="Helical" evidence="1">
    <location>
        <begin position="38"/>
        <end position="58"/>
    </location>
</feature>
<feature type="transmembrane region" description="Helical" evidence="1">
    <location>
        <begin position="68"/>
        <end position="88"/>
    </location>
</feature>
<feature type="transmembrane region" description="Helical" evidence="1">
    <location>
        <begin position="101"/>
        <end position="121"/>
    </location>
</feature>
<feature type="transmembrane region" description="Helical" evidence="1">
    <location>
        <begin position="137"/>
        <end position="157"/>
    </location>
</feature>
<feature type="transmembrane region" description="Helical" evidence="1">
    <location>
        <begin position="175"/>
        <end position="195"/>
    </location>
</feature>
<feature type="transmembrane region" description="Helical" evidence="1">
    <location>
        <begin position="214"/>
        <end position="234"/>
    </location>
</feature>
<feature type="transmembrane region" description="Helical" evidence="1">
    <location>
        <begin position="259"/>
        <end position="279"/>
    </location>
</feature>
<feature type="transmembrane region" description="Helical" evidence="1">
    <location>
        <begin position="290"/>
        <end position="310"/>
    </location>
</feature>
<feature type="transmembrane region" description="Helical" evidence="1">
    <location>
        <begin position="321"/>
        <end position="341"/>
    </location>
</feature>
<keyword id="KW-0997">Cell inner membrane</keyword>
<keyword id="KW-1003">Cell membrane</keyword>
<keyword id="KW-0472">Membrane</keyword>
<keyword id="KW-0762">Sugar transport</keyword>
<keyword id="KW-0769">Symport</keyword>
<keyword id="KW-0812">Transmembrane</keyword>
<keyword id="KW-1133">Transmembrane helix</keyword>
<keyword id="KW-0813">Transport</keyword>